<proteinExistence type="inferred from homology"/>
<accession>Q4A5J6</accession>
<dbReference type="EC" id="6.5.1.2" evidence="1"/>
<dbReference type="EMBL" id="AE017245">
    <property type="protein sequence ID" value="AAZ43975.1"/>
    <property type="molecule type" value="Genomic_DNA"/>
</dbReference>
<dbReference type="RefSeq" id="WP_011283704.1">
    <property type="nucleotide sequence ID" value="NC_007294.1"/>
</dbReference>
<dbReference type="SMR" id="Q4A5J6"/>
<dbReference type="STRING" id="262723.MS53_0567"/>
<dbReference type="KEGG" id="msy:MS53_0567"/>
<dbReference type="eggNOG" id="COG0272">
    <property type="taxonomic scope" value="Bacteria"/>
</dbReference>
<dbReference type="HOGENOM" id="CLU_007764_2_0_14"/>
<dbReference type="OrthoDB" id="9759736at2"/>
<dbReference type="Proteomes" id="UP000000549">
    <property type="component" value="Chromosome"/>
</dbReference>
<dbReference type="GO" id="GO:0005829">
    <property type="term" value="C:cytosol"/>
    <property type="evidence" value="ECO:0007669"/>
    <property type="project" value="TreeGrafter"/>
</dbReference>
<dbReference type="GO" id="GO:0003911">
    <property type="term" value="F:DNA ligase (NAD+) activity"/>
    <property type="evidence" value="ECO:0007669"/>
    <property type="project" value="UniProtKB-UniRule"/>
</dbReference>
<dbReference type="GO" id="GO:0046872">
    <property type="term" value="F:metal ion binding"/>
    <property type="evidence" value="ECO:0007669"/>
    <property type="project" value="UniProtKB-KW"/>
</dbReference>
<dbReference type="GO" id="GO:0006281">
    <property type="term" value="P:DNA repair"/>
    <property type="evidence" value="ECO:0007669"/>
    <property type="project" value="UniProtKB-KW"/>
</dbReference>
<dbReference type="GO" id="GO:0006260">
    <property type="term" value="P:DNA replication"/>
    <property type="evidence" value="ECO:0007669"/>
    <property type="project" value="UniProtKB-KW"/>
</dbReference>
<dbReference type="CDD" id="cd17748">
    <property type="entry name" value="BRCT_DNA_ligase_like"/>
    <property type="match status" value="1"/>
</dbReference>
<dbReference type="CDD" id="cd00114">
    <property type="entry name" value="LIGANc"/>
    <property type="match status" value="1"/>
</dbReference>
<dbReference type="Gene3D" id="1.10.150.20">
    <property type="entry name" value="5' to 3' exonuclease, C-terminal subdomain"/>
    <property type="match status" value="2"/>
</dbReference>
<dbReference type="Gene3D" id="3.40.50.10190">
    <property type="entry name" value="BRCT domain"/>
    <property type="match status" value="1"/>
</dbReference>
<dbReference type="Gene3D" id="3.30.470.30">
    <property type="entry name" value="DNA ligase/mRNA capping enzyme"/>
    <property type="match status" value="1"/>
</dbReference>
<dbReference type="Gene3D" id="1.10.287.610">
    <property type="entry name" value="Helix hairpin bin"/>
    <property type="match status" value="1"/>
</dbReference>
<dbReference type="Gene3D" id="2.40.50.140">
    <property type="entry name" value="Nucleic acid-binding proteins"/>
    <property type="match status" value="1"/>
</dbReference>
<dbReference type="HAMAP" id="MF_01588">
    <property type="entry name" value="DNA_ligase_A"/>
    <property type="match status" value="1"/>
</dbReference>
<dbReference type="InterPro" id="IPR001357">
    <property type="entry name" value="BRCT_dom"/>
</dbReference>
<dbReference type="InterPro" id="IPR036420">
    <property type="entry name" value="BRCT_dom_sf"/>
</dbReference>
<dbReference type="InterPro" id="IPR041663">
    <property type="entry name" value="DisA/LigA_HHH"/>
</dbReference>
<dbReference type="InterPro" id="IPR001679">
    <property type="entry name" value="DNA_ligase"/>
</dbReference>
<dbReference type="InterPro" id="IPR018239">
    <property type="entry name" value="DNA_ligase_AS"/>
</dbReference>
<dbReference type="InterPro" id="IPR013839">
    <property type="entry name" value="DNAligase_adenylation"/>
</dbReference>
<dbReference type="InterPro" id="IPR013840">
    <property type="entry name" value="DNAligase_N"/>
</dbReference>
<dbReference type="InterPro" id="IPR012340">
    <property type="entry name" value="NA-bd_OB-fold"/>
</dbReference>
<dbReference type="InterPro" id="IPR004150">
    <property type="entry name" value="NAD_DNA_ligase_OB"/>
</dbReference>
<dbReference type="InterPro" id="IPR010994">
    <property type="entry name" value="RuvA_2-like"/>
</dbReference>
<dbReference type="NCBIfam" id="NF005932">
    <property type="entry name" value="PRK07956.1"/>
    <property type="match status" value="1"/>
</dbReference>
<dbReference type="PANTHER" id="PTHR23389">
    <property type="entry name" value="CHROMOSOME TRANSMISSION FIDELITY FACTOR 18"/>
    <property type="match status" value="1"/>
</dbReference>
<dbReference type="PANTHER" id="PTHR23389:SF9">
    <property type="entry name" value="DNA LIGASE"/>
    <property type="match status" value="1"/>
</dbReference>
<dbReference type="Pfam" id="PF00533">
    <property type="entry name" value="BRCT"/>
    <property type="match status" value="1"/>
</dbReference>
<dbReference type="Pfam" id="PF01653">
    <property type="entry name" value="DNA_ligase_aden"/>
    <property type="match status" value="2"/>
</dbReference>
<dbReference type="Pfam" id="PF03120">
    <property type="entry name" value="DNA_ligase_OB"/>
    <property type="match status" value="1"/>
</dbReference>
<dbReference type="Pfam" id="PF12826">
    <property type="entry name" value="HHH_2"/>
    <property type="match status" value="1"/>
</dbReference>
<dbReference type="Pfam" id="PF22745">
    <property type="entry name" value="Nlig-Ia"/>
    <property type="match status" value="1"/>
</dbReference>
<dbReference type="PIRSF" id="PIRSF001604">
    <property type="entry name" value="LigA"/>
    <property type="match status" value="1"/>
</dbReference>
<dbReference type="SMART" id="SM00292">
    <property type="entry name" value="BRCT"/>
    <property type="match status" value="1"/>
</dbReference>
<dbReference type="SMART" id="SM00532">
    <property type="entry name" value="LIGANc"/>
    <property type="match status" value="1"/>
</dbReference>
<dbReference type="SUPFAM" id="SSF52113">
    <property type="entry name" value="BRCT domain"/>
    <property type="match status" value="1"/>
</dbReference>
<dbReference type="SUPFAM" id="SSF56091">
    <property type="entry name" value="DNA ligase/mRNA capping enzyme, catalytic domain"/>
    <property type="match status" value="1"/>
</dbReference>
<dbReference type="SUPFAM" id="SSF50249">
    <property type="entry name" value="Nucleic acid-binding proteins"/>
    <property type="match status" value="1"/>
</dbReference>
<dbReference type="SUPFAM" id="SSF47781">
    <property type="entry name" value="RuvA domain 2-like"/>
    <property type="match status" value="1"/>
</dbReference>
<dbReference type="PROSITE" id="PS50172">
    <property type="entry name" value="BRCT"/>
    <property type="match status" value="1"/>
</dbReference>
<dbReference type="PROSITE" id="PS01055">
    <property type="entry name" value="DNA_LIGASE_N1"/>
    <property type="match status" value="1"/>
</dbReference>
<organism>
    <name type="scientific">Mycoplasmopsis synoviae (strain 53)</name>
    <name type="common">Mycoplasma synoviae</name>
    <dbReference type="NCBI Taxonomy" id="262723"/>
    <lineage>
        <taxon>Bacteria</taxon>
        <taxon>Bacillati</taxon>
        <taxon>Mycoplasmatota</taxon>
        <taxon>Mycoplasmoidales</taxon>
        <taxon>Metamycoplasmataceae</taxon>
        <taxon>Mycoplasmopsis</taxon>
    </lineage>
</organism>
<gene>
    <name evidence="1" type="primary">ligA</name>
    <name type="ordered locus">MS53_0567</name>
</gene>
<reference key="1">
    <citation type="journal article" date="2005" name="J. Bacteriol.">
        <title>Swine and poultry pathogens: the complete genome sequences of two strains of Mycoplasma hyopneumoniae and a strain of Mycoplasma synoviae.</title>
        <authorList>
            <person name="Vasconcelos A.T.R."/>
            <person name="Ferreira H.B."/>
            <person name="Bizarro C.V."/>
            <person name="Bonatto S.L."/>
            <person name="Carvalho M.O."/>
            <person name="Pinto P.M."/>
            <person name="Almeida D.F."/>
            <person name="Almeida L.G.P."/>
            <person name="Almeida R."/>
            <person name="Alves-Junior L."/>
            <person name="Assuncao E.N."/>
            <person name="Azevedo V.A.C."/>
            <person name="Bogo M.R."/>
            <person name="Brigido M.M."/>
            <person name="Brocchi M."/>
            <person name="Burity H.A."/>
            <person name="Camargo A.A."/>
            <person name="Camargo S.S."/>
            <person name="Carepo M.S."/>
            <person name="Carraro D.M."/>
            <person name="de Mattos Cascardo J.C."/>
            <person name="Castro L.A."/>
            <person name="Cavalcanti G."/>
            <person name="Chemale G."/>
            <person name="Collevatti R.G."/>
            <person name="Cunha C.W."/>
            <person name="Dallagiovanna B."/>
            <person name="Dambros B.P."/>
            <person name="Dellagostin O.A."/>
            <person name="Falcao C."/>
            <person name="Fantinatti-Garboggini F."/>
            <person name="Felipe M.S.S."/>
            <person name="Fiorentin L."/>
            <person name="Franco G.R."/>
            <person name="Freitas N.S.A."/>
            <person name="Frias D."/>
            <person name="Grangeiro T.B."/>
            <person name="Grisard E.C."/>
            <person name="Guimaraes C.T."/>
            <person name="Hungria M."/>
            <person name="Jardim S.N."/>
            <person name="Krieger M.A."/>
            <person name="Laurino J.P."/>
            <person name="Lima L.F.A."/>
            <person name="Lopes M.I."/>
            <person name="Loreto E.L.S."/>
            <person name="Madeira H.M.F."/>
            <person name="Manfio G.P."/>
            <person name="Maranhao A.Q."/>
            <person name="Martinkovics C.T."/>
            <person name="Medeiros S.R.B."/>
            <person name="Moreira M.A.M."/>
            <person name="Neiva M."/>
            <person name="Ramalho-Neto C.E."/>
            <person name="Nicolas M.F."/>
            <person name="Oliveira S.C."/>
            <person name="Paixao R.F.C."/>
            <person name="Pedrosa F.O."/>
            <person name="Pena S.D.J."/>
            <person name="Pereira M."/>
            <person name="Pereira-Ferrari L."/>
            <person name="Piffer I."/>
            <person name="Pinto L.S."/>
            <person name="Potrich D.P."/>
            <person name="Salim A.C.M."/>
            <person name="Santos F.R."/>
            <person name="Schmitt R."/>
            <person name="Schneider M.P.C."/>
            <person name="Schrank A."/>
            <person name="Schrank I.S."/>
            <person name="Schuck A.F."/>
            <person name="Seuanez H.N."/>
            <person name="Silva D.W."/>
            <person name="Silva R."/>
            <person name="Silva S.C."/>
            <person name="Soares C.M.A."/>
            <person name="Souza K.R.L."/>
            <person name="Souza R.C."/>
            <person name="Staats C.C."/>
            <person name="Steffens M.B.R."/>
            <person name="Teixeira S.M.R."/>
            <person name="Urmenyi T.P."/>
            <person name="Vainstein M.H."/>
            <person name="Zuccherato L.W."/>
            <person name="Simpson A.J.G."/>
            <person name="Zaha A."/>
        </authorList>
    </citation>
    <scope>NUCLEOTIDE SEQUENCE [LARGE SCALE GENOMIC DNA]</scope>
    <source>
        <strain>53</strain>
    </source>
</reference>
<comment type="function">
    <text evidence="1">DNA ligase that catalyzes the formation of phosphodiester linkages between 5'-phosphoryl and 3'-hydroxyl groups in double-stranded DNA using NAD as a coenzyme and as the energy source for the reaction. It is essential for DNA replication and repair of damaged DNA.</text>
</comment>
<comment type="catalytic activity">
    <reaction evidence="1">
        <text>NAD(+) + (deoxyribonucleotide)n-3'-hydroxyl + 5'-phospho-(deoxyribonucleotide)m = (deoxyribonucleotide)n+m + AMP + beta-nicotinamide D-nucleotide.</text>
        <dbReference type="EC" id="6.5.1.2"/>
    </reaction>
</comment>
<comment type="cofactor">
    <cofactor evidence="1">
        <name>Mg(2+)</name>
        <dbReference type="ChEBI" id="CHEBI:18420"/>
    </cofactor>
    <cofactor evidence="1">
        <name>Mn(2+)</name>
        <dbReference type="ChEBI" id="CHEBI:29035"/>
    </cofactor>
</comment>
<comment type="similarity">
    <text evidence="1">Belongs to the NAD-dependent DNA ligase family. LigA subfamily.</text>
</comment>
<name>DNLJ_MYCS5</name>
<feature type="chain" id="PRO_0000313328" description="DNA ligase">
    <location>
        <begin position="1"/>
        <end position="697"/>
    </location>
</feature>
<feature type="domain" description="BRCT" evidence="1">
    <location>
        <begin position="616"/>
        <end position="697"/>
    </location>
</feature>
<feature type="active site" description="N6-AMP-lysine intermediate" evidence="1">
    <location>
        <position position="116"/>
    </location>
</feature>
<feature type="binding site" evidence="1">
    <location>
        <begin position="34"/>
        <end position="38"/>
    </location>
    <ligand>
        <name>NAD(+)</name>
        <dbReference type="ChEBI" id="CHEBI:57540"/>
    </ligand>
</feature>
<feature type="binding site" evidence="1">
    <location>
        <begin position="83"/>
        <end position="84"/>
    </location>
    <ligand>
        <name>NAD(+)</name>
        <dbReference type="ChEBI" id="CHEBI:57540"/>
    </ligand>
</feature>
<feature type="binding site" evidence="1">
    <location>
        <position position="114"/>
    </location>
    <ligand>
        <name>NAD(+)</name>
        <dbReference type="ChEBI" id="CHEBI:57540"/>
    </ligand>
</feature>
<feature type="binding site" evidence="1">
    <location>
        <position position="137"/>
    </location>
    <ligand>
        <name>NAD(+)</name>
        <dbReference type="ChEBI" id="CHEBI:57540"/>
    </ligand>
</feature>
<feature type="binding site" evidence="1">
    <location>
        <position position="171"/>
    </location>
    <ligand>
        <name>NAD(+)</name>
        <dbReference type="ChEBI" id="CHEBI:57540"/>
    </ligand>
</feature>
<feature type="binding site" evidence="1">
    <location>
        <position position="315"/>
    </location>
    <ligand>
        <name>NAD(+)</name>
        <dbReference type="ChEBI" id="CHEBI:57540"/>
    </ligand>
</feature>
<feature type="binding site" evidence="1">
    <location>
        <position position="339"/>
    </location>
    <ligand>
        <name>NAD(+)</name>
        <dbReference type="ChEBI" id="CHEBI:57540"/>
    </ligand>
</feature>
<feature type="binding site" evidence="1">
    <location>
        <position position="430"/>
    </location>
    <ligand>
        <name>Zn(2+)</name>
        <dbReference type="ChEBI" id="CHEBI:29105"/>
    </ligand>
</feature>
<feature type="binding site" evidence="1">
    <location>
        <position position="433"/>
    </location>
    <ligand>
        <name>Zn(2+)</name>
        <dbReference type="ChEBI" id="CHEBI:29105"/>
    </ligand>
</feature>
<feature type="binding site" evidence="1">
    <location>
        <position position="448"/>
    </location>
    <ligand>
        <name>Zn(2+)</name>
        <dbReference type="ChEBI" id="CHEBI:29105"/>
    </ligand>
</feature>
<feature type="binding site" evidence="1">
    <location>
        <position position="453"/>
    </location>
    <ligand>
        <name>Zn(2+)</name>
        <dbReference type="ChEBI" id="CHEBI:29105"/>
    </ligand>
</feature>
<evidence type="ECO:0000255" key="1">
    <source>
        <dbReference type="HAMAP-Rule" id="MF_01588"/>
    </source>
</evidence>
<keyword id="KW-0227">DNA damage</keyword>
<keyword id="KW-0234">DNA repair</keyword>
<keyword id="KW-0235">DNA replication</keyword>
<keyword id="KW-0436">Ligase</keyword>
<keyword id="KW-0460">Magnesium</keyword>
<keyword id="KW-0464">Manganese</keyword>
<keyword id="KW-0479">Metal-binding</keyword>
<keyword id="KW-0520">NAD</keyword>
<keyword id="KW-1185">Reference proteome</keyword>
<keyword id="KW-0862">Zinc</keyword>
<protein>
    <recommendedName>
        <fullName evidence="1">DNA ligase</fullName>
        <ecNumber evidence="1">6.5.1.2</ecNumber>
    </recommendedName>
    <alternativeName>
        <fullName evidence="1">Polydeoxyribonucleotide synthase [NAD(+)]</fullName>
    </alternativeName>
</protein>
<sequence length="697" mass="80464">MSNQQIKEKIISLNNYLKHLNHLYYDLDAPEVDDKTYDSLYNELLELEAKYPSLVLEDSVTKIIGAFVSNKFKKTKHNKEMLSLDKAYKESEIFSFYENFTQYKNLENFGFSLEPKIDGLSISIHYDNGKFIKAITRGDGTTGEDVSENVFQIRDVPKQISYLKPLEVRGEIYMKKSTWKSLNEDIKNQYFQTNIEKIFSYMQALPKSKSWSNLKIKTPIFFKNARNAAAGTLRQKDPKIVKSRNLSSLFYEIVSPLEHNLKTQMEVLAFLKEQNFEVNEFQKLAKNDQEIMFEINEFSKIKNNFEFDCDGFVIKFNLIDKWEQIGFTSKFPKWAIAYKYMLEEANTKILNIVAQVGRTGNITYIAQFMPVELNNTTVQNATLHNYEFIKKNNINIGDEITIIKSGEIIPKVISIYKKNTDSVFEKVLNCPSCNSLLEIPEGYVDQFCRNENCDEKKIQMLTFFVSKNCLNITNLSVQNIRIFYNHPVIQMREIQDIFLLKNHVDEIKKIKFFAGKSQENKKINNILQSIEKAKDAYLRNVLAALGIKGIGNIAANLLTNKITKLSDLNNLTDEDLLSIDTFGEKSIENLKEFLSSEKNQDLIKFLDENLNYLNSKKSSKLNNLNFAITGSLSISRDEFKKIILDNGGIFSNSVSKNTSYLISNSKENSTKIKKALENNIKVITEEEFHNLLKEENA</sequence>